<organism>
    <name type="scientific">Helicobacter pylori (strain G27)</name>
    <dbReference type="NCBI Taxonomy" id="563041"/>
    <lineage>
        <taxon>Bacteria</taxon>
        <taxon>Pseudomonadati</taxon>
        <taxon>Campylobacterota</taxon>
        <taxon>Epsilonproteobacteria</taxon>
        <taxon>Campylobacterales</taxon>
        <taxon>Helicobacteraceae</taxon>
        <taxon>Helicobacter</taxon>
    </lineage>
</organism>
<evidence type="ECO:0000255" key="1">
    <source>
        <dbReference type="HAMAP-Rule" id="MF_00406"/>
    </source>
</evidence>
<gene>
    <name evidence="1" type="primary">fabZ</name>
    <name type="ordered locus">HPG27_1321</name>
</gene>
<feature type="chain" id="PRO_1000123642" description="3-hydroxyacyl-[acyl-carrier-protein] dehydratase FabZ">
    <location>
        <begin position="1"/>
        <end position="159"/>
    </location>
</feature>
<feature type="active site" evidence="1">
    <location>
        <position position="58"/>
    </location>
</feature>
<name>FABZ_HELPG</name>
<protein>
    <recommendedName>
        <fullName evidence="1">3-hydroxyacyl-[acyl-carrier-protein] dehydratase FabZ</fullName>
        <ecNumber evidence="1">4.2.1.59</ecNumber>
    </recommendedName>
    <alternativeName>
        <fullName evidence="1">(3R)-hydroxymyristoyl-[acyl-carrier-protein] dehydratase</fullName>
        <shortName evidence="1">(3R)-hydroxymyristoyl-ACP dehydrase</shortName>
    </alternativeName>
    <alternativeName>
        <fullName evidence="1">Beta-hydroxyacyl-ACP dehydratase</fullName>
    </alternativeName>
</protein>
<keyword id="KW-0963">Cytoplasm</keyword>
<keyword id="KW-0441">Lipid A biosynthesis</keyword>
<keyword id="KW-0444">Lipid biosynthesis</keyword>
<keyword id="KW-0443">Lipid metabolism</keyword>
<keyword id="KW-0456">Lyase</keyword>
<keyword id="KW-1185">Reference proteome</keyword>
<sequence>MEQSHQNLQSQFFIEHILQILPHRYPMLLIDRVVELEANRKIVAYKNITFNEDVFNGHFPNKPIFPGVLIVEGMAQTGGFLAFTSLWGFDPEIAKTKIVYFMTIDKVKFRIPVTPGDRLEYHLEVLKHKGMIWQVGGTAQVDGKVVAEAELKAMIAERE</sequence>
<comment type="function">
    <text evidence="1">Involved in unsaturated fatty acids biosynthesis. Catalyzes the dehydration of short chain beta-hydroxyacyl-ACPs and long chain saturated and unsaturated beta-hydroxyacyl-ACPs.</text>
</comment>
<comment type="catalytic activity">
    <reaction evidence="1">
        <text>a (3R)-hydroxyacyl-[ACP] = a (2E)-enoyl-[ACP] + H2O</text>
        <dbReference type="Rhea" id="RHEA:13097"/>
        <dbReference type="Rhea" id="RHEA-COMP:9925"/>
        <dbReference type="Rhea" id="RHEA-COMP:9945"/>
        <dbReference type="ChEBI" id="CHEBI:15377"/>
        <dbReference type="ChEBI" id="CHEBI:78784"/>
        <dbReference type="ChEBI" id="CHEBI:78827"/>
        <dbReference type="EC" id="4.2.1.59"/>
    </reaction>
</comment>
<comment type="subcellular location">
    <subcellularLocation>
        <location evidence="1">Cytoplasm</location>
    </subcellularLocation>
</comment>
<comment type="similarity">
    <text evidence="1">Belongs to the thioester dehydratase family. FabZ subfamily.</text>
</comment>
<reference key="1">
    <citation type="journal article" date="2009" name="J. Bacteriol.">
        <title>The complete genome sequence of Helicobacter pylori strain G27.</title>
        <authorList>
            <person name="Baltrus D.A."/>
            <person name="Amieva M.R."/>
            <person name="Covacci A."/>
            <person name="Lowe T.M."/>
            <person name="Merrell D.S."/>
            <person name="Ottemann K.M."/>
            <person name="Stein M."/>
            <person name="Salama N.R."/>
            <person name="Guillemin K."/>
        </authorList>
    </citation>
    <scope>NUCLEOTIDE SEQUENCE [LARGE SCALE GENOMIC DNA]</scope>
    <source>
        <strain>G27</strain>
    </source>
</reference>
<proteinExistence type="inferred from homology"/>
<accession>B5Z920</accession>
<dbReference type="EC" id="4.2.1.59" evidence="1"/>
<dbReference type="EMBL" id="CP001173">
    <property type="protein sequence ID" value="ACI28069.1"/>
    <property type="molecule type" value="Genomic_DNA"/>
</dbReference>
<dbReference type="RefSeq" id="WP_000438046.1">
    <property type="nucleotide sequence ID" value="NC_011333.1"/>
</dbReference>
<dbReference type="SMR" id="B5Z920"/>
<dbReference type="KEGG" id="hpg:HPG27_1321"/>
<dbReference type="HOGENOM" id="CLU_078912_1_0_7"/>
<dbReference type="Proteomes" id="UP000001735">
    <property type="component" value="Chromosome"/>
</dbReference>
<dbReference type="GO" id="GO:0005737">
    <property type="term" value="C:cytoplasm"/>
    <property type="evidence" value="ECO:0007669"/>
    <property type="project" value="UniProtKB-SubCell"/>
</dbReference>
<dbReference type="GO" id="GO:0016020">
    <property type="term" value="C:membrane"/>
    <property type="evidence" value="ECO:0007669"/>
    <property type="project" value="GOC"/>
</dbReference>
<dbReference type="GO" id="GO:0019171">
    <property type="term" value="F:(3R)-hydroxyacyl-[acyl-carrier-protein] dehydratase activity"/>
    <property type="evidence" value="ECO:0007669"/>
    <property type="project" value="UniProtKB-EC"/>
</dbReference>
<dbReference type="GO" id="GO:0006633">
    <property type="term" value="P:fatty acid biosynthetic process"/>
    <property type="evidence" value="ECO:0007669"/>
    <property type="project" value="UniProtKB-UniRule"/>
</dbReference>
<dbReference type="GO" id="GO:0009245">
    <property type="term" value="P:lipid A biosynthetic process"/>
    <property type="evidence" value="ECO:0007669"/>
    <property type="project" value="UniProtKB-UniRule"/>
</dbReference>
<dbReference type="CDD" id="cd01288">
    <property type="entry name" value="FabZ"/>
    <property type="match status" value="1"/>
</dbReference>
<dbReference type="FunFam" id="3.10.129.10:FF:000001">
    <property type="entry name" value="3-hydroxyacyl-[acyl-carrier-protein] dehydratase FabZ"/>
    <property type="match status" value="1"/>
</dbReference>
<dbReference type="Gene3D" id="3.10.129.10">
    <property type="entry name" value="Hotdog Thioesterase"/>
    <property type="match status" value="1"/>
</dbReference>
<dbReference type="HAMAP" id="MF_00406">
    <property type="entry name" value="FabZ"/>
    <property type="match status" value="1"/>
</dbReference>
<dbReference type="InterPro" id="IPR013114">
    <property type="entry name" value="FabA_FabZ"/>
</dbReference>
<dbReference type="InterPro" id="IPR010084">
    <property type="entry name" value="FabZ"/>
</dbReference>
<dbReference type="InterPro" id="IPR029069">
    <property type="entry name" value="HotDog_dom_sf"/>
</dbReference>
<dbReference type="NCBIfam" id="TIGR01750">
    <property type="entry name" value="fabZ"/>
    <property type="match status" value="1"/>
</dbReference>
<dbReference type="NCBIfam" id="NF000582">
    <property type="entry name" value="PRK00006.1"/>
    <property type="match status" value="1"/>
</dbReference>
<dbReference type="PANTHER" id="PTHR30272">
    <property type="entry name" value="3-HYDROXYACYL-[ACYL-CARRIER-PROTEIN] DEHYDRATASE"/>
    <property type="match status" value="1"/>
</dbReference>
<dbReference type="PANTHER" id="PTHR30272:SF1">
    <property type="entry name" value="3-HYDROXYACYL-[ACYL-CARRIER-PROTEIN] DEHYDRATASE"/>
    <property type="match status" value="1"/>
</dbReference>
<dbReference type="Pfam" id="PF07977">
    <property type="entry name" value="FabA"/>
    <property type="match status" value="1"/>
</dbReference>
<dbReference type="SUPFAM" id="SSF54637">
    <property type="entry name" value="Thioesterase/thiol ester dehydrase-isomerase"/>
    <property type="match status" value="1"/>
</dbReference>